<reference key="1">
    <citation type="journal article" date="2011" name="PLoS Genet.">
        <title>Comparative genomic analysis of human fungal pathogens causing paracoccidioidomycosis.</title>
        <authorList>
            <person name="Desjardins C.A."/>
            <person name="Champion M.D."/>
            <person name="Holder J.W."/>
            <person name="Muszewska A."/>
            <person name="Goldberg J."/>
            <person name="Bailao A.M."/>
            <person name="Brigido M.M."/>
            <person name="Ferreira M.E."/>
            <person name="Garcia A.M."/>
            <person name="Grynberg M."/>
            <person name="Gujja S."/>
            <person name="Heiman D.I."/>
            <person name="Henn M.R."/>
            <person name="Kodira C.D."/>
            <person name="Leon-Narvaez H."/>
            <person name="Longo L.V.G."/>
            <person name="Ma L.-J."/>
            <person name="Malavazi I."/>
            <person name="Matsuo A.L."/>
            <person name="Morais F.V."/>
            <person name="Pereira M."/>
            <person name="Rodriguez-Brito S."/>
            <person name="Sakthikumar S."/>
            <person name="Salem-Izacc S.M."/>
            <person name="Sykes S.M."/>
            <person name="Teixeira M.M."/>
            <person name="Vallejo M.C."/>
            <person name="Walter M.E."/>
            <person name="Yandava C."/>
            <person name="Young S."/>
            <person name="Zeng Q."/>
            <person name="Zucker J."/>
            <person name="Felipe M.S."/>
            <person name="Goldman G.H."/>
            <person name="Haas B.J."/>
            <person name="McEwen J.G."/>
            <person name="Nino-Vega G."/>
            <person name="Puccia R."/>
            <person name="San-Blas G."/>
            <person name="Soares C.M."/>
            <person name="Birren B.W."/>
            <person name="Cuomo C.A."/>
        </authorList>
    </citation>
    <scope>NUCLEOTIDE SEQUENCE [LARGE SCALE GENOMIC DNA]</scope>
    <source>
        <strain>Pb03</strain>
    </source>
</reference>
<dbReference type="EC" id="4.2.1.109" evidence="1"/>
<dbReference type="EMBL" id="KN305534">
    <property type="protein sequence ID" value="EEH20811.1"/>
    <property type="molecule type" value="Genomic_DNA"/>
</dbReference>
<dbReference type="SMR" id="C0S4Z7"/>
<dbReference type="VEuPathDB" id="FungiDB:PABG_03042"/>
<dbReference type="HOGENOM" id="CLU_006033_4_0_1"/>
<dbReference type="OrthoDB" id="872at33183"/>
<dbReference type="UniPathway" id="UPA00904">
    <property type="reaction ID" value="UER00875"/>
</dbReference>
<dbReference type="GO" id="GO:0005737">
    <property type="term" value="C:cytoplasm"/>
    <property type="evidence" value="ECO:0007669"/>
    <property type="project" value="UniProtKB-SubCell"/>
</dbReference>
<dbReference type="GO" id="GO:0046570">
    <property type="term" value="F:methylthioribulose 1-phosphate dehydratase activity"/>
    <property type="evidence" value="ECO:0007669"/>
    <property type="project" value="UniProtKB-UniRule"/>
</dbReference>
<dbReference type="GO" id="GO:0008270">
    <property type="term" value="F:zinc ion binding"/>
    <property type="evidence" value="ECO:0007669"/>
    <property type="project" value="UniProtKB-UniRule"/>
</dbReference>
<dbReference type="GO" id="GO:0019509">
    <property type="term" value="P:L-methionine salvage from methylthioadenosine"/>
    <property type="evidence" value="ECO:0007669"/>
    <property type="project" value="UniProtKB-UniRule"/>
</dbReference>
<dbReference type="FunFam" id="3.40.225.10:FF:000003">
    <property type="entry name" value="Methylthioribulose-1-phosphate dehydratase"/>
    <property type="match status" value="1"/>
</dbReference>
<dbReference type="Gene3D" id="3.40.225.10">
    <property type="entry name" value="Class II aldolase/adducin N-terminal domain"/>
    <property type="match status" value="1"/>
</dbReference>
<dbReference type="HAMAP" id="MF_03116">
    <property type="entry name" value="Salvage_MtnB_euk"/>
    <property type="match status" value="1"/>
</dbReference>
<dbReference type="InterPro" id="IPR001303">
    <property type="entry name" value="Aldolase_II/adducin_N"/>
</dbReference>
<dbReference type="InterPro" id="IPR036409">
    <property type="entry name" value="Aldolase_II/adducin_N_sf"/>
</dbReference>
<dbReference type="InterPro" id="IPR017714">
    <property type="entry name" value="MethylthioRu-1-P_deHdtase_MtnB"/>
</dbReference>
<dbReference type="InterPro" id="IPR027514">
    <property type="entry name" value="Salvage_MtnB_euk"/>
</dbReference>
<dbReference type="NCBIfam" id="TIGR03328">
    <property type="entry name" value="salvage_mtnB"/>
    <property type="match status" value="1"/>
</dbReference>
<dbReference type="PANTHER" id="PTHR10640">
    <property type="entry name" value="METHYLTHIORIBULOSE-1-PHOSPHATE DEHYDRATASE"/>
    <property type="match status" value="1"/>
</dbReference>
<dbReference type="PANTHER" id="PTHR10640:SF7">
    <property type="entry name" value="METHYLTHIORIBULOSE-1-PHOSPHATE DEHYDRATASE"/>
    <property type="match status" value="1"/>
</dbReference>
<dbReference type="Pfam" id="PF00596">
    <property type="entry name" value="Aldolase_II"/>
    <property type="match status" value="1"/>
</dbReference>
<dbReference type="SMART" id="SM01007">
    <property type="entry name" value="Aldolase_II"/>
    <property type="match status" value="1"/>
</dbReference>
<dbReference type="SUPFAM" id="SSF53639">
    <property type="entry name" value="AraD/HMP-PK domain-like"/>
    <property type="match status" value="1"/>
</dbReference>
<gene>
    <name evidence="1" type="primary">MDE1</name>
    <name type="ORF">PABG_03042</name>
</gene>
<feature type="chain" id="PRO_0000393835" description="Methylthioribulose-1-phosphate dehydratase">
    <location>
        <begin position="1"/>
        <end position="240"/>
    </location>
</feature>
<feature type="active site" description="Proton donor/acceptor" evidence="1">
    <location>
        <position position="145"/>
    </location>
</feature>
<feature type="binding site" evidence="1">
    <location>
        <position position="99"/>
    </location>
    <ligand>
        <name>substrate</name>
    </ligand>
</feature>
<feature type="binding site" evidence="1">
    <location>
        <position position="116"/>
    </location>
    <ligand>
        <name>Zn(2+)</name>
        <dbReference type="ChEBI" id="CHEBI:29105"/>
    </ligand>
</feature>
<feature type="binding site" evidence="1">
    <location>
        <position position="118"/>
    </location>
    <ligand>
        <name>Zn(2+)</name>
        <dbReference type="ChEBI" id="CHEBI:29105"/>
    </ligand>
</feature>
<feature type="binding site" evidence="1">
    <location>
        <position position="201"/>
    </location>
    <ligand>
        <name>Zn(2+)</name>
        <dbReference type="ChEBI" id="CHEBI:29105"/>
    </ligand>
</feature>
<sequence>MSDIKDGNNDHLVQSDDPEHPANLIPALCRNFYSHGWVTGTGGGASIKRDNHIFIAPSGVQKELIQPHNIFVLSYPTPKYPPSARQYIRKPLKLNPSACTPLFLAAFERGAGCCIHTHSQWAVLVTLLVEREKGPEGCFEISNIEQIKGIPRGKGKGMMGFYDTLKIPIIENTAFEEDLTQSLEEAMEMYPDTYAVLVRRHGIYVWGDDVAKAKTQCESLDYLFQLAVEMHRLGLPWVKS</sequence>
<comment type="function">
    <text evidence="1">Catalyzes the dehydration of methylthioribulose-1-phosphate (MTRu-1-P) into 2,3-diketo-5-methylthiopentyl-1-phosphate (DK-MTP-1-P).</text>
</comment>
<comment type="catalytic activity">
    <reaction evidence="1">
        <text>5-(methylsulfanyl)-D-ribulose 1-phosphate = 5-methylsulfanyl-2,3-dioxopentyl phosphate + H2O</text>
        <dbReference type="Rhea" id="RHEA:15549"/>
        <dbReference type="ChEBI" id="CHEBI:15377"/>
        <dbReference type="ChEBI" id="CHEBI:58548"/>
        <dbReference type="ChEBI" id="CHEBI:58828"/>
        <dbReference type="EC" id="4.2.1.109"/>
    </reaction>
</comment>
<comment type="cofactor">
    <cofactor evidence="1">
        <name>Zn(2+)</name>
        <dbReference type="ChEBI" id="CHEBI:29105"/>
    </cofactor>
    <text evidence="1">Binds 1 zinc ion per subunit.</text>
</comment>
<comment type="pathway">
    <text evidence="1">Amino-acid biosynthesis; L-methionine biosynthesis via salvage pathway; L-methionine from S-methyl-5-thio-alpha-D-ribose 1-phosphate: step 2/6.</text>
</comment>
<comment type="subcellular location">
    <subcellularLocation>
        <location evidence="1">Cytoplasm</location>
    </subcellularLocation>
</comment>
<comment type="similarity">
    <text evidence="1">Belongs to the aldolase class II family. MtnB subfamily.</text>
</comment>
<protein>
    <recommendedName>
        <fullName evidence="1">Methylthioribulose-1-phosphate dehydratase</fullName>
        <shortName evidence="1">MTRu-1-P dehydratase</shortName>
        <ecNumber evidence="1">4.2.1.109</ecNumber>
    </recommendedName>
</protein>
<name>MTNB_PARBP</name>
<keyword id="KW-0028">Amino-acid biosynthesis</keyword>
<keyword id="KW-0963">Cytoplasm</keyword>
<keyword id="KW-0456">Lyase</keyword>
<keyword id="KW-0479">Metal-binding</keyword>
<keyword id="KW-0486">Methionine biosynthesis</keyword>
<keyword id="KW-0862">Zinc</keyword>
<organism>
    <name type="scientific">Paracoccidioides brasiliensis (strain Pb03)</name>
    <dbReference type="NCBI Taxonomy" id="482561"/>
    <lineage>
        <taxon>Eukaryota</taxon>
        <taxon>Fungi</taxon>
        <taxon>Dikarya</taxon>
        <taxon>Ascomycota</taxon>
        <taxon>Pezizomycotina</taxon>
        <taxon>Eurotiomycetes</taxon>
        <taxon>Eurotiomycetidae</taxon>
        <taxon>Onygenales</taxon>
        <taxon>Ajellomycetaceae</taxon>
        <taxon>Paracoccidioides</taxon>
    </lineage>
</organism>
<evidence type="ECO:0000255" key="1">
    <source>
        <dbReference type="HAMAP-Rule" id="MF_03116"/>
    </source>
</evidence>
<accession>C0S4Z7</accession>
<proteinExistence type="inferred from homology"/>